<keyword id="KW-0030">Aminoacyl-tRNA synthetase</keyword>
<keyword id="KW-0067">ATP-binding</keyword>
<keyword id="KW-0963">Cytoplasm</keyword>
<keyword id="KW-0436">Ligase</keyword>
<keyword id="KW-0547">Nucleotide-binding</keyword>
<keyword id="KW-0648">Protein biosynthesis</keyword>
<protein>
    <recommendedName>
        <fullName evidence="1">Arginine--tRNA ligase</fullName>
        <ecNumber evidence="1">6.1.1.19</ecNumber>
    </recommendedName>
    <alternativeName>
        <fullName evidence="1">Arginyl-tRNA synthetase</fullName>
        <shortName evidence="1">ArgRS</shortName>
    </alternativeName>
</protein>
<reference key="1">
    <citation type="journal article" date="2007" name="PLoS Genet.">
        <title>Patterns and implications of gene gain and loss in the evolution of Prochlorococcus.</title>
        <authorList>
            <person name="Kettler G.C."/>
            <person name="Martiny A.C."/>
            <person name="Huang K."/>
            <person name="Zucker J."/>
            <person name="Coleman M.L."/>
            <person name="Rodrigue S."/>
            <person name="Chen F."/>
            <person name="Lapidus A."/>
            <person name="Ferriera S."/>
            <person name="Johnson J."/>
            <person name="Steglich C."/>
            <person name="Church G.M."/>
            <person name="Richardson P."/>
            <person name="Chisholm S.W."/>
        </authorList>
    </citation>
    <scope>NUCLEOTIDE SEQUENCE [LARGE SCALE GENOMIC DNA]</scope>
    <source>
        <strain>NATL1A</strain>
    </source>
</reference>
<evidence type="ECO:0000255" key="1">
    <source>
        <dbReference type="HAMAP-Rule" id="MF_00123"/>
    </source>
</evidence>
<accession>A2C016</accession>
<sequence>MLEISARLEEALNRAFTKVFPQEDRSSKTSSILTGSNLVPASKPEFGDFQINCALSLAKEINRPPRDIAQQIAKQLQQDNDFVRICNPPLIAGPGFINLSINSKTLISEIHFRLNDKRLGVPLKKFNTDKIEEEKSNNRVIIDFSSPNIAKEMHVGHLRSTIIGDSLARVLEFCGYEVLRLNHVGDWGTQFGMLITHLKEVVPEVLHTKDVVEISDLVNFYRQAKKRFDEDQIFQNKSRSEVVNLQAGDKESLIAWQLLCNQSRKEFQKIYDRLDIKLTERGESFYNKFLVDVINDLKNKKLLINDQGAQCIFLDGLVGKDGKPQPIIIQKSDGGFNYATTDLAAIKYRLTIPPHGDGACRLIYVTDAGQASHFSGVFQIAKLANWIPTDCQIEHVPFGLVQGEDGKKLKTRSGETIRLVDLLDEAIQRARDDLKNRLNTESRSENENFIDKVSTTVGIASIKYADLSQNRISNYQFSFDKMLSLQGNTAPYLLYALVRIAGISRKGGDLNVSSQNIQFNESQEWDLIRKLLQLDSIIAEVEKELLPNRLCGYLFELSQTFNRFYDQVPILKASEPSRASRLVLCSITADTLKLGMSLLGIPTLERM</sequence>
<organism>
    <name type="scientific">Prochlorococcus marinus (strain NATL1A)</name>
    <dbReference type="NCBI Taxonomy" id="167555"/>
    <lineage>
        <taxon>Bacteria</taxon>
        <taxon>Bacillati</taxon>
        <taxon>Cyanobacteriota</taxon>
        <taxon>Cyanophyceae</taxon>
        <taxon>Synechococcales</taxon>
        <taxon>Prochlorococcaceae</taxon>
        <taxon>Prochlorococcus</taxon>
    </lineage>
</organism>
<proteinExistence type="inferred from homology"/>
<feature type="chain" id="PRO_1000018087" description="Arginine--tRNA ligase">
    <location>
        <begin position="1"/>
        <end position="607"/>
    </location>
</feature>
<feature type="short sequence motif" description="'HIGH' region">
    <location>
        <begin position="147"/>
        <end position="157"/>
    </location>
</feature>
<name>SYR_PROM1</name>
<gene>
    <name evidence="1" type="primary">argS</name>
    <name type="ordered locus">NATL1_02621</name>
</gene>
<comment type="catalytic activity">
    <reaction evidence="1">
        <text>tRNA(Arg) + L-arginine + ATP = L-arginyl-tRNA(Arg) + AMP + diphosphate</text>
        <dbReference type="Rhea" id="RHEA:20301"/>
        <dbReference type="Rhea" id="RHEA-COMP:9658"/>
        <dbReference type="Rhea" id="RHEA-COMP:9673"/>
        <dbReference type="ChEBI" id="CHEBI:30616"/>
        <dbReference type="ChEBI" id="CHEBI:32682"/>
        <dbReference type="ChEBI" id="CHEBI:33019"/>
        <dbReference type="ChEBI" id="CHEBI:78442"/>
        <dbReference type="ChEBI" id="CHEBI:78513"/>
        <dbReference type="ChEBI" id="CHEBI:456215"/>
        <dbReference type="EC" id="6.1.1.19"/>
    </reaction>
</comment>
<comment type="subunit">
    <text evidence="1">Monomer.</text>
</comment>
<comment type="subcellular location">
    <subcellularLocation>
        <location evidence="1">Cytoplasm</location>
    </subcellularLocation>
</comment>
<comment type="similarity">
    <text evidence="1">Belongs to the class-I aminoacyl-tRNA synthetase family.</text>
</comment>
<dbReference type="EC" id="6.1.1.19" evidence="1"/>
<dbReference type="EMBL" id="CP000553">
    <property type="protein sequence ID" value="ABM74826.1"/>
    <property type="molecule type" value="Genomic_DNA"/>
</dbReference>
<dbReference type="RefSeq" id="WP_011823044.1">
    <property type="nucleotide sequence ID" value="NC_008819.1"/>
</dbReference>
<dbReference type="SMR" id="A2C016"/>
<dbReference type="KEGG" id="pme:NATL1_02621"/>
<dbReference type="eggNOG" id="COG0018">
    <property type="taxonomic scope" value="Bacteria"/>
</dbReference>
<dbReference type="HOGENOM" id="CLU_006406_5_1_3"/>
<dbReference type="Proteomes" id="UP000002592">
    <property type="component" value="Chromosome"/>
</dbReference>
<dbReference type="GO" id="GO:0005737">
    <property type="term" value="C:cytoplasm"/>
    <property type="evidence" value="ECO:0007669"/>
    <property type="project" value="UniProtKB-SubCell"/>
</dbReference>
<dbReference type="GO" id="GO:0004814">
    <property type="term" value="F:arginine-tRNA ligase activity"/>
    <property type="evidence" value="ECO:0007669"/>
    <property type="project" value="UniProtKB-UniRule"/>
</dbReference>
<dbReference type="GO" id="GO:0005524">
    <property type="term" value="F:ATP binding"/>
    <property type="evidence" value="ECO:0007669"/>
    <property type="project" value="UniProtKB-UniRule"/>
</dbReference>
<dbReference type="GO" id="GO:0006420">
    <property type="term" value="P:arginyl-tRNA aminoacylation"/>
    <property type="evidence" value="ECO:0007669"/>
    <property type="project" value="UniProtKB-UniRule"/>
</dbReference>
<dbReference type="CDD" id="cd07956">
    <property type="entry name" value="Anticodon_Ia_Arg"/>
    <property type="match status" value="1"/>
</dbReference>
<dbReference type="CDD" id="cd00671">
    <property type="entry name" value="ArgRS_core"/>
    <property type="match status" value="1"/>
</dbReference>
<dbReference type="FunFam" id="3.40.50.620:FF:000030">
    <property type="entry name" value="Arginine--tRNA ligase"/>
    <property type="match status" value="1"/>
</dbReference>
<dbReference type="FunFam" id="1.10.730.10:FF:000006">
    <property type="entry name" value="Arginyl-tRNA synthetase 2, mitochondrial"/>
    <property type="match status" value="1"/>
</dbReference>
<dbReference type="Gene3D" id="3.30.1360.70">
    <property type="entry name" value="Arginyl tRNA synthetase N-terminal domain"/>
    <property type="match status" value="1"/>
</dbReference>
<dbReference type="Gene3D" id="3.40.50.620">
    <property type="entry name" value="HUPs"/>
    <property type="match status" value="1"/>
</dbReference>
<dbReference type="Gene3D" id="1.10.730.10">
    <property type="entry name" value="Isoleucyl-tRNA Synthetase, Domain 1"/>
    <property type="match status" value="1"/>
</dbReference>
<dbReference type="HAMAP" id="MF_00123">
    <property type="entry name" value="Arg_tRNA_synth"/>
    <property type="match status" value="1"/>
</dbReference>
<dbReference type="InterPro" id="IPR001412">
    <property type="entry name" value="aa-tRNA-synth_I_CS"/>
</dbReference>
<dbReference type="InterPro" id="IPR001278">
    <property type="entry name" value="Arg-tRNA-ligase"/>
</dbReference>
<dbReference type="InterPro" id="IPR005148">
    <property type="entry name" value="Arg-tRNA-synth_N"/>
</dbReference>
<dbReference type="InterPro" id="IPR036695">
    <property type="entry name" value="Arg-tRNA-synth_N_sf"/>
</dbReference>
<dbReference type="InterPro" id="IPR035684">
    <property type="entry name" value="ArgRS_core"/>
</dbReference>
<dbReference type="InterPro" id="IPR008909">
    <property type="entry name" value="DALR_anticod-bd"/>
</dbReference>
<dbReference type="InterPro" id="IPR014729">
    <property type="entry name" value="Rossmann-like_a/b/a_fold"/>
</dbReference>
<dbReference type="InterPro" id="IPR009080">
    <property type="entry name" value="tRNAsynth_Ia_anticodon-bd"/>
</dbReference>
<dbReference type="NCBIfam" id="TIGR00456">
    <property type="entry name" value="argS"/>
    <property type="match status" value="1"/>
</dbReference>
<dbReference type="PANTHER" id="PTHR11956:SF5">
    <property type="entry name" value="ARGININE--TRNA LIGASE, CYTOPLASMIC"/>
    <property type="match status" value="1"/>
</dbReference>
<dbReference type="PANTHER" id="PTHR11956">
    <property type="entry name" value="ARGINYL-TRNA SYNTHETASE"/>
    <property type="match status" value="1"/>
</dbReference>
<dbReference type="Pfam" id="PF03485">
    <property type="entry name" value="Arg_tRNA_synt_N"/>
    <property type="match status" value="1"/>
</dbReference>
<dbReference type="Pfam" id="PF05746">
    <property type="entry name" value="DALR_1"/>
    <property type="match status" value="1"/>
</dbReference>
<dbReference type="Pfam" id="PF00750">
    <property type="entry name" value="tRNA-synt_1d"/>
    <property type="match status" value="1"/>
</dbReference>
<dbReference type="PRINTS" id="PR01038">
    <property type="entry name" value="TRNASYNTHARG"/>
</dbReference>
<dbReference type="SMART" id="SM01016">
    <property type="entry name" value="Arg_tRNA_synt_N"/>
    <property type="match status" value="1"/>
</dbReference>
<dbReference type="SMART" id="SM00836">
    <property type="entry name" value="DALR_1"/>
    <property type="match status" value="1"/>
</dbReference>
<dbReference type="SUPFAM" id="SSF47323">
    <property type="entry name" value="Anticodon-binding domain of a subclass of class I aminoacyl-tRNA synthetases"/>
    <property type="match status" value="1"/>
</dbReference>
<dbReference type="SUPFAM" id="SSF55190">
    <property type="entry name" value="Arginyl-tRNA synthetase (ArgRS), N-terminal 'additional' domain"/>
    <property type="match status" value="1"/>
</dbReference>
<dbReference type="SUPFAM" id="SSF52374">
    <property type="entry name" value="Nucleotidylyl transferase"/>
    <property type="match status" value="1"/>
</dbReference>
<dbReference type="PROSITE" id="PS00178">
    <property type="entry name" value="AA_TRNA_LIGASE_I"/>
    <property type="match status" value="1"/>
</dbReference>